<name>AZF1_ASPNC</name>
<reference key="1">
    <citation type="journal article" date="2007" name="Nat. Biotechnol.">
        <title>Genome sequencing and analysis of the versatile cell factory Aspergillus niger CBS 513.88.</title>
        <authorList>
            <person name="Pel H.J."/>
            <person name="de Winde J.H."/>
            <person name="Archer D.B."/>
            <person name="Dyer P.S."/>
            <person name="Hofmann G."/>
            <person name="Schaap P.J."/>
            <person name="Turner G."/>
            <person name="de Vries R.P."/>
            <person name="Albang R."/>
            <person name="Albermann K."/>
            <person name="Andersen M.R."/>
            <person name="Bendtsen J.D."/>
            <person name="Benen J.A.E."/>
            <person name="van den Berg M."/>
            <person name="Breestraat S."/>
            <person name="Caddick M.X."/>
            <person name="Contreras R."/>
            <person name="Cornell M."/>
            <person name="Coutinho P.M."/>
            <person name="Danchin E.G.J."/>
            <person name="Debets A.J.M."/>
            <person name="Dekker P."/>
            <person name="van Dijck P.W.M."/>
            <person name="van Dijk A."/>
            <person name="Dijkhuizen L."/>
            <person name="Driessen A.J.M."/>
            <person name="d'Enfert C."/>
            <person name="Geysens S."/>
            <person name="Goosen C."/>
            <person name="Groot G.S.P."/>
            <person name="de Groot P.W.J."/>
            <person name="Guillemette T."/>
            <person name="Henrissat B."/>
            <person name="Herweijer M."/>
            <person name="van den Hombergh J.P.T.W."/>
            <person name="van den Hondel C.A.M.J.J."/>
            <person name="van der Heijden R.T.J.M."/>
            <person name="van der Kaaij R.M."/>
            <person name="Klis F.M."/>
            <person name="Kools H.J."/>
            <person name="Kubicek C.P."/>
            <person name="van Kuyk P.A."/>
            <person name="Lauber J."/>
            <person name="Lu X."/>
            <person name="van der Maarel M.J.E.C."/>
            <person name="Meulenberg R."/>
            <person name="Menke H."/>
            <person name="Mortimer M.A."/>
            <person name="Nielsen J."/>
            <person name="Oliver S.G."/>
            <person name="Olsthoorn M."/>
            <person name="Pal K."/>
            <person name="van Peij N.N.M.E."/>
            <person name="Ram A.F.J."/>
            <person name="Rinas U."/>
            <person name="Roubos J.A."/>
            <person name="Sagt C.M.J."/>
            <person name="Schmoll M."/>
            <person name="Sun J."/>
            <person name="Ussery D."/>
            <person name="Varga J."/>
            <person name="Vervecken W."/>
            <person name="van de Vondervoort P.J.J."/>
            <person name="Wedler H."/>
            <person name="Woesten H.A.B."/>
            <person name="Zeng A.-P."/>
            <person name="van Ooyen A.J.J."/>
            <person name="Visser J."/>
            <person name="Stam H."/>
        </authorList>
    </citation>
    <scope>NUCLEOTIDE SEQUENCE [LARGE SCALE GENOMIC DNA]</scope>
    <source>
        <strain>ATCC MYA-4892 / CBS 513.88 / FGSC A1513</strain>
    </source>
</reference>
<reference key="2">
    <citation type="journal article" date="2023" name="Appl. Microbiol. Biotechnol.">
        <title>AnAzf1 acts as a positive regulator of ochratoxin A biosynthesis in Aspergillus niger.</title>
        <authorList>
            <person name="Wei S."/>
            <person name="Hu C."/>
            <person name="Zhang Y."/>
            <person name="Lv Y."/>
            <person name="Zhang S."/>
            <person name="Zhai H."/>
            <person name="Hu Y."/>
        </authorList>
    </citation>
    <scope>FUNCTION</scope>
    <scope>DISRUPTION PHENOTYPE</scope>
</reference>
<accession>A5ABV9</accession>
<keyword id="KW-0479">Metal-binding</keyword>
<keyword id="KW-0539">Nucleus</keyword>
<keyword id="KW-1185">Reference proteome</keyword>
<keyword id="KW-0677">Repeat</keyword>
<keyword id="KW-0804">Transcription</keyword>
<keyword id="KW-0805">Transcription regulation</keyword>
<keyword id="KW-0862">Zinc</keyword>
<keyword id="KW-0863">Zinc-finger</keyword>
<proteinExistence type="predicted"/>
<evidence type="ECO:0000255" key="1">
    <source>
        <dbReference type="PROSITE-ProRule" id="PRU00042"/>
    </source>
</evidence>
<evidence type="ECO:0000256" key="2">
    <source>
        <dbReference type="SAM" id="MobiDB-lite"/>
    </source>
</evidence>
<evidence type="ECO:0000269" key="3">
    <source>
    </source>
</evidence>
<evidence type="ECO:0000303" key="4">
    <source>
    </source>
</evidence>
<evidence type="ECO:0000305" key="5"/>
<gene>
    <name evidence="4" type="primary">azf1</name>
    <name type="ORF">An15g00120</name>
</gene>
<sequence>METAEPVSYEFPGHAVGAVAPRRMMGSNVGHNFPFYTNPTGGYTLPFHQSSSPAYSFGHTLNHHHHHHHHHPGYQHYFVAGQQPINPQPVRLSSEPPSIQQIPDIRPAKNAVNRVARDPLMKIEHNGASQQPPGAQSSSNEEGAQGKSSSSNEVEFSTEVDILMKAIQAKASAQSPGVQSLPPLQQLTHGGSNGYPQSYSMPVTTPRCTVMVEEAPSRSGKKRKYACTLPQCGKSFAQKTHLDIHMRAHTGDKPFVCKEPSCGQRFSQLGNLKTHQRRHTGEKPFSCDICQKRFAQRGNVRAHKITHQHAKPFTCLLDDCGKQFTQLGNLKSHQNKFHATTLRNLTMKFSQVTEGDHMSPQDRKLWEYFATLYKNSNKGIKGRGKDRRISPTSRSDPGSESRRRIEPLSSTDDKMRRASYGDTSMYNGGSSSDDDDAEPYFIERQAH</sequence>
<dbReference type="EMBL" id="AM270328">
    <property type="protein sequence ID" value="CAK42181.1"/>
    <property type="molecule type" value="Genomic_DNA"/>
</dbReference>
<dbReference type="RefSeq" id="XP_001396551.1">
    <property type="nucleotide sequence ID" value="XM_001396514.2"/>
</dbReference>
<dbReference type="SMR" id="A5ABV9"/>
<dbReference type="EnsemblFungi" id="CAK42181">
    <property type="protein sequence ID" value="CAK42181"/>
    <property type="gene ID" value="An15g00120"/>
</dbReference>
<dbReference type="GeneID" id="4987627"/>
<dbReference type="KEGG" id="ang:An15g00120"/>
<dbReference type="VEuPathDB" id="FungiDB:An15g00120"/>
<dbReference type="HOGENOM" id="CLU_028814_1_1_1"/>
<dbReference type="Proteomes" id="UP000006706">
    <property type="component" value="Chromosome 3R"/>
</dbReference>
<dbReference type="GO" id="GO:0005634">
    <property type="term" value="C:nucleus"/>
    <property type="evidence" value="ECO:0007669"/>
    <property type="project" value="UniProtKB-SubCell"/>
</dbReference>
<dbReference type="GO" id="GO:0008270">
    <property type="term" value="F:zinc ion binding"/>
    <property type="evidence" value="ECO:0007669"/>
    <property type="project" value="UniProtKB-KW"/>
</dbReference>
<dbReference type="FunFam" id="3.30.160.60:FF:000765">
    <property type="entry name" value="Zinc finger 45-like"/>
    <property type="match status" value="1"/>
</dbReference>
<dbReference type="FunFam" id="3.30.160.60:FF:000446">
    <property type="entry name" value="Zinc finger protein"/>
    <property type="match status" value="1"/>
</dbReference>
<dbReference type="FunFam" id="3.30.160.60:FF:000072">
    <property type="entry name" value="zinc finger protein 143 isoform X1"/>
    <property type="match status" value="1"/>
</dbReference>
<dbReference type="FunFam" id="3.30.160.60:FF:001289">
    <property type="entry name" value="Zinc finger protein 574"/>
    <property type="match status" value="1"/>
</dbReference>
<dbReference type="Gene3D" id="3.30.160.60">
    <property type="entry name" value="Classic Zinc Finger"/>
    <property type="match status" value="4"/>
</dbReference>
<dbReference type="InterPro" id="IPR036236">
    <property type="entry name" value="Znf_C2H2_sf"/>
</dbReference>
<dbReference type="InterPro" id="IPR013087">
    <property type="entry name" value="Znf_C2H2_type"/>
</dbReference>
<dbReference type="PANTHER" id="PTHR23235">
    <property type="entry name" value="KRUEPPEL-LIKE TRANSCRIPTION FACTOR"/>
    <property type="match status" value="1"/>
</dbReference>
<dbReference type="Pfam" id="PF00096">
    <property type="entry name" value="zf-C2H2"/>
    <property type="match status" value="4"/>
</dbReference>
<dbReference type="SMART" id="SM00355">
    <property type="entry name" value="ZnF_C2H2"/>
    <property type="match status" value="4"/>
</dbReference>
<dbReference type="SUPFAM" id="SSF57667">
    <property type="entry name" value="beta-beta-alpha zinc fingers"/>
    <property type="match status" value="2"/>
</dbReference>
<dbReference type="PROSITE" id="PS00028">
    <property type="entry name" value="ZINC_FINGER_C2H2_1"/>
    <property type="match status" value="4"/>
</dbReference>
<dbReference type="PROSITE" id="PS50157">
    <property type="entry name" value="ZINC_FINGER_C2H2_2"/>
    <property type="match status" value="4"/>
</dbReference>
<feature type="chain" id="PRO_0000458892" description="Transcription factor azf1">
    <location>
        <begin position="1"/>
        <end position="447"/>
    </location>
</feature>
<feature type="zinc finger region" description="C2H2-type 1" evidence="1">
    <location>
        <begin position="225"/>
        <end position="249"/>
    </location>
</feature>
<feature type="zinc finger region" description="C2H2-type 2" evidence="1">
    <location>
        <begin position="255"/>
        <end position="279"/>
    </location>
</feature>
<feature type="zinc finger region" description="C2H2-type 3" evidence="1">
    <location>
        <begin position="285"/>
        <end position="307"/>
    </location>
</feature>
<feature type="zinc finger region" description="C2H2-type 4" evidence="1">
    <location>
        <begin position="313"/>
        <end position="338"/>
    </location>
</feature>
<feature type="region of interest" description="Disordered" evidence="2">
    <location>
        <begin position="125"/>
        <end position="155"/>
    </location>
</feature>
<feature type="region of interest" description="Disordered" evidence="2">
    <location>
        <begin position="174"/>
        <end position="199"/>
    </location>
</feature>
<feature type="region of interest" description="Disordered" evidence="2">
    <location>
        <begin position="377"/>
        <end position="447"/>
    </location>
</feature>
<feature type="compositionally biased region" description="Low complexity" evidence="2">
    <location>
        <begin position="127"/>
        <end position="139"/>
    </location>
</feature>
<feature type="compositionally biased region" description="Polar residues" evidence="2">
    <location>
        <begin position="140"/>
        <end position="155"/>
    </location>
</feature>
<feature type="compositionally biased region" description="Basic and acidic residues" evidence="2">
    <location>
        <begin position="397"/>
        <end position="416"/>
    </location>
</feature>
<feature type="compositionally biased region" description="Polar residues" evidence="2">
    <location>
        <begin position="421"/>
        <end position="431"/>
    </location>
</feature>
<protein>
    <recommendedName>
        <fullName evidence="4">Transcription factor azf1</fullName>
    </recommendedName>
</protein>
<organism>
    <name type="scientific">Aspergillus niger (strain ATCC MYA-4892 / CBS 513.88 / FGSC A1513)</name>
    <dbReference type="NCBI Taxonomy" id="425011"/>
    <lineage>
        <taxon>Eukaryota</taxon>
        <taxon>Fungi</taxon>
        <taxon>Dikarya</taxon>
        <taxon>Ascomycota</taxon>
        <taxon>Pezizomycotina</taxon>
        <taxon>Eurotiomycetes</taxon>
        <taxon>Eurotiomycetidae</taxon>
        <taxon>Eurotiales</taxon>
        <taxon>Aspergillaceae</taxon>
        <taxon>Aspergillus</taxon>
        <taxon>Aspergillus subgen. Circumdati</taxon>
    </lineage>
</organism>
<comment type="function">
    <text evidence="3">Transcription factor that acts as a positive regulator of ochratoxin A (OTA) biosynthesis via controlling the expression of antioxidant genes and oxidative phosphorylation genes.</text>
</comment>
<comment type="subcellular location">
    <subcellularLocation>
        <location evidence="5">Nucleus</location>
    </subcellularLocation>
</comment>
<comment type="disruption phenotype">
    <text evidence="3">Completely blocks ochratoxin A (OTA) production, and repressed the OTA cluster genes at the transcriptional level (PubMed:36809388). Alters the MAPK pathway and cellular iron homeostasis (PubMed:36809388). Significantly upregulates antioxidant genes and downregulates oxidative phosphorylation genes (PubMed:36809388).</text>
</comment>